<reference key="1">
    <citation type="submission" date="2007-02" db="EMBL/GenBank/DDBJ databases">
        <title>Complete sequence of Clostridium thermocellum ATCC 27405.</title>
        <authorList>
            <consortium name="US DOE Joint Genome Institute"/>
            <person name="Copeland A."/>
            <person name="Lucas S."/>
            <person name="Lapidus A."/>
            <person name="Barry K."/>
            <person name="Detter J.C."/>
            <person name="Glavina del Rio T."/>
            <person name="Hammon N."/>
            <person name="Israni S."/>
            <person name="Dalin E."/>
            <person name="Tice H."/>
            <person name="Pitluck S."/>
            <person name="Chertkov O."/>
            <person name="Brettin T."/>
            <person name="Bruce D."/>
            <person name="Han C."/>
            <person name="Tapia R."/>
            <person name="Gilna P."/>
            <person name="Schmutz J."/>
            <person name="Larimer F."/>
            <person name="Land M."/>
            <person name="Hauser L."/>
            <person name="Kyrpides N."/>
            <person name="Mikhailova N."/>
            <person name="Wu J.H.D."/>
            <person name="Newcomb M."/>
            <person name="Richardson P."/>
        </authorList>
    </citation>
    <scope>NUCLEOTIDE SEQUENCE [LARGE SCALE GENOMIC DNA]</scope>
    <source>
        <strain>ATCC 27405 / DSM 1237 / JCM 9322 / NBRC 103400 / NCIMB 10682 / NRRL B-4536 / VPI 7372</strain>
    </source>
</reference>
<organism>
    <name type="scientific">Acetivibrio thermocellus (strain ATCC 27405 / DSM 1237 / JCM 9322 / NBRC 103400 / NCIMB 10682 / NRRL B-4536 / VPI 7372)</name>
    <name type="common">Clostridium thermocellum</name>
    <dbReference type="NCBI Taxonomy" id="203119"/>
    <lineage>
        <taxon>Bacteria</taxon>
        <taxon>Bacillati</taxon>
        <taxon>Bacillota</taxon>
        <taxon>Clostridia</taxon>
        <taxon>Eubacteriales</taxon>
        <taxon>Oscillospiraceae</taxon>
        <taxon>Acetivibrio</taxon>
    </lineage>
</organism>
<protein>
    <recommendedName>
        <fullName evidence="1">Dihydroorotase</fullName>
        <shortName evidence="1">DHOase</shortName>
        <ecNumber evidence="1">3.5.2.3</ecNumber>
    </recommendedName>
</protein>
<keyword id="KW-0378">Hydrolase</keyword>
<keyword id="KW-0479">Metal-binding</keyword>
<keyword id="KW-0665">Pyrimidine biosynthesis</keyword>
<keyword id="KW-1185">Reference proteome</keyword>
<keyword id="KW-0862">Zinc</keyword>
<gene>
    <name evidence="1" type="primary">pyrC</name>
    <name type="ordered locus">Cthe_0952</name>
</gene>
<proteinExistence type="inferred from homology"/>
<evidence type="ECO:0000255" key="1">
    <source>
        <dbReference type="HAMAP-Rule" id="MF_00220"/>
    </source>
</evidence>
<accession>A3DE07</accession>
<name>PYRC_ACET2</name>
<dbReference type="EC" id="3.5.2.3" evidence="1"/>
<dbReference type="EMBL" id="CP000568">
    <property type="protein sequence ID" value="ABN52186.1"/>
    <property type="molecule type" value="Genomic_DNA"/>
</dbReference>
<dbReference type="SMR" id="A3DE07"/>
<dbReference type="STRING" id="203119.Cthe_0952"/>
<dbReference type="KEGG" id="cth:Cthe_0952"/>
<dbReference type="eggNOG" id="COG0044">
    <property type="taxonomic scope" value="Bacteria"/>
</dbReference>
<dbReference type="HOGENOM" id="CLU_015572_1_0_9"/>
<dbReference type="UniPathway" id="UPA00070">
    <property type="reaction ID" value="UER00117"/>
</dbReference>
<dbReference type="Proteomes" id="UP000002145">
    <property type="component" value="Chromosome"/>
</dbReference>
<dbReference type="GO" id="GO:0005737">
    <property type="term" value="C:cytoplasm"/>
    <property type="evidence" value="ECO:0007669"/>
    <property type="project" value="TreeGrafter"/>
</dbReference>
<dbReference type="GO" id="GO:0004038">
    <property type="term" value="F:allantoinase activity"/>
    <property type="evidence" value="ECO:0007669"/>
    <property type="project" value="TreeGrafter"/>
</dbReference>
<dbReference type="GO" id="GO:0004151">
    <property type="term" value="F:dihydroorotase activity"/>
    <property type="evidence" value="ECO:0007669"/>
    <property type="project" value="UniProtKB-UniRule"/>
</dbReference>
<dbReference type="GO" id="GO:0008270">
    <property type="term" value="F:zinc ion binding"/>
    <property type="evidence" value="ECO:0007669"/>
    <property type="project" value="UniProtKB-UniRule"/>
</dbReference>
<dbReference type="GO" id="GO:0044205">
    <property type="term" value="P:'de novo' UMP biosynthetic process"/>
    <property type="evidence" value="ECO:0007669"/>
    <property type="project" value="UniProtKB-UniRule"/>
</dbReference>
<dbReference type="GO" id="GO:0006145">
    <property type="term" value="P:purine nucleobase catabolic process"/>
    <property type="evidence" value="ECO:0007669"/>
    <property type="project" value="TreeGrafter"/>
</dbReference>
<dbReference type="CDD" id="cd01317">
    <property type="entry name" value="DHOase_IIa"/>
    <property type="match status" value="1"/>
</dbReference>
<dbReference type="Gene3D" id="3.20.20.140">
    <property type="entry name" value="Metal-dependent hydrolases"/>
    <property type="match status" value="1"/>
</dbReference>
<dbReference type="Gene3D" id="2.30.40.10">
    <property type="entry name" value="Urease, subunit C, domain 1"/>
    <property type="match status" value="1"/>
</dbReference>
<dbReference type="HAMAP" id="MF_00220_B">
    <property type="entry name" value="PyrC_classI_B"/>
    <property type="match status" value="1"/>
</dbReference>
<dbReference type="InterPro" id="IPR006680">
    <property type="entry name" value="Amidohydro-rel"/>
</dbReference>
<dbReference type="InterPro" id="IPR004722">
    <property type="entry name" value="DHOase"/>
</dbReference>
<dbReference type="InterPro" id="IPR050138">
    <property type="entry name" value="DHOase/Allantoinase_Hydrolase"/>
</dbReference>
<dbReference type="InterPro" id="IPR002195">
    <property type="entry name" value="Dihydroorotase_CS"/>
</dbReference>
<dbReference type="InterPro" id="IPR011059">
    <property type="entry name" value="Metal-dep_hydrolase_composite"/>
</dbReference>
<dbReference type="InterPro" id="IPR032466">
    <property type="entry name" value="Metal_Hydrolase"/>
</dbReference>
<dbReference type="NCBIfam" id="TIGR00857">
    <property type="entry name" value="pyrC_multi"/>
    <property type="match status" value="1"/>
</dbReference>
<dbReference type="PANTHER" id="PTHR43668">
    <property type="entry name" value="ALLANTOINASE"/>
    <property type="match status" value="1"/>
</dbReference>
<dbReference type="PANTHER" id="PTHR43668:SF2">
    <property type="entry name" value="ALLANTOINASE"/>
    <property type="match status" value="1"/>
</dbReference>
<dbReference type="Pfam" id="PF01979">
    <property type="entry name" value="Amidohydro_1"/>
    <property type="match status" value="1"/>
</dbReference>
<dbReference type="SUPFAM" id="SSF51338">
    <property type="entry name" value="Composite domain of metallo-dependent hydrolases"/>
    <property type="match status" value="1"/>
</dbReference>
<dbReference type="SUPFAM" id="SSF51556">
    <property type="entry name" value="Metallo-dependent hydrolases"/>
    <property type="match status" value="1"/>
</dbReference>
<dbReference type="PROSITE" id="PS00483">
    <property type="entry name" value="DIHYDROOROTASE_2"/>
    <property type="match status" value="1"/>
</dbReference>
<comment type="function">
    <text evidence="1">Catalyzes the reversible cyclization of carbamoyl aspartate to dihydroorotate.</text>
</comment>
<comment type="catalytic activity">
    <reaction evidence="1">
        <text>(S)-dihydroorotate + H2O = N-carbamoyl-L-aspartate + H(+)</text>
        <dbReference type="Rhea" id="RHEA:24296"/>
        <dbReference type="ChEBI" id="CHEBI:15377"/>
        <dbReference type="ChEBI" id="CHEBI:15378"/>
        <dbReference type="ChEBI" id="CHEBI:30864"/>
        <dbReference type="ChEBI" id="CHEBI:32814"/>
        <dbReference type="EC" id="3.5.2.3"/>
    </reaction>
</comment>
<comment type="cofactor">
    <cofactor evidence="1">
        <name>Zn(2+)</name>
        <dbReference type="ChEBI" id="CHEBI:29105"/>
    </cofactor>
    <text evidence="1">Binds 2 Zn(2+) ions per subunit.</text>
</comment>
<comment type="pathway">
    <text evidence="1">Pyrimidine metabolism; UMP biosynthesis via de novo pathway; (S)-dihydroorotate from bicarbonate: step 3/3.</text>
</comment>
<comment type="similarity">
    <text evidence="1">Belongs to the metallo-dependent hydrolases superfamily. DHOase family. Class I DHOase subfamily.</text>
</comment>
<feature type="chain" id="PRO_0000325591" description="Dihydroorotase">
    <location>
        <begin position="1"/>
        <end position="426"/>
    </location>
</feature>
<feature type="active site" evidence="1">
    <location>
        <position position="303"/>
    </location>
</feature>
<feature type="binding site" evidence="1">
    <location>
        <position position="58"/>
    </location>
    <ligand>
        <name>Zn(2+)</name>
        <dbReference type="ChEBI" id="CHEBI:29105"/>
        <label>1</label>
    </ligand>
</feature>
<feature type="binding site" evidence="1">
    <location>
        <begin position="60"/>
        <end position="62"/>
    </location>
    <ligand>
        <name>substrate</name>
    </ligand>
</feature>
<feature type="binding site" evidence="1">
    <location>
        <position position="60"/>
    </location>
    <ligand>
        <name>Zn(2+)</name>
        <dbReference type="ChEBI" id="CHEBI:29105"/>
        <label>1</label>
    </ligand>
</feature>
<feature type="binding site" evidence="1">
    <location>
        <position position="92"/>
    </location>
    <ligand>
        <name>substrate</name>
    </ligand>
</feature>
<feature type="binding site" evidence="1">
    <location>
        <position position="150"/>
    </location>
    <ligand>
        <name>Zn(2+)</name>
        <dbReference type="ChEBI" id="CHEBI:29105"/>
        <label>1</label>
    </ligand>
</feature>
<feature type="binding site" evidence="1">
    <location>
        <position position="150"/>
    </location>
    <ligand>
        <name>Zn(2+)</name>
        <dbReference type="ChEBI" id="CHEBI:29105"/>
        <label>2</label>
    </ligand>
</feature>
<feature type="binding site" evidence="1">
    <location>
        <position position="177"/>
    </location>
    <ligand>
        <name>Zn(2+)</name>
        <dbReference type="ChEBI" id="CHEBI:29105"/>
        <label>2</label>
    </ligand>
</feature>
<feature type="binding site" evidence="1">
    <location>
        <position position="230"/>
    </location>
    <ligand>
        <name>Zn(2+)</name>
        <dbReference type="ChEBI" id="CHEBI:29105"/>
        <label>2</label>
    </ligand>
</feature>
<feature type="binding site" evidence="1">
    <location>
        <position position="276"/>
    </location>
    <ligand>
        <name>substrate</name>
    </ligand>
</feature>
<feature type="binding site" evidence="1">
    <location>
        <position position="303"/>
    </location>
    <ligand>
        <name>Zn(2+)</name>
        <dbReference type="ChEBI" id="CHEBI:29105"/>
        <label>1</label>
    </ligand>
</feature>
<feature type="binding site" evidence="1">
    <location>
        <position position="307"/>
    </location>
    <ligand>
        <name>substrate</name>
    </ligand>
</feature>
<sequence length="426" mass="46253">MLIKGGHVVDPKTNTNGIMDILVEDGIITEIGKDIEISNGDIIYAEGKLVLPGLVDAHCHLRDPGFEYKEDIETGTMSAAMGGFTSIACMPNTDPVCDNKAVVKYIINKAKQDGYVNVYPIGAISKGQKGEELSEIGELKFAGAVAISDDGKPVKSSSLMKRALEYSSMFDIAVISHCEDLDLADGGVMNEGYWSTVMGLKGIPSAAEEIMVARDIILSEYTKVPIHIAHVSTELSVELIRNAKKRGVKVTCETCPHYFVLTDEACKDFNTLAKVNPPLRTRRDVEAVIEGLKDGTIDIIATDHAPHHADEKNVEFNLAANGMVGFETALPLAITYLVKPGHLTISQLVEKMCVNPSKLLGINKGTLETGRSADITIVDLNEEFVVDVNKFKSKSKNSPFHGFKLNGSVYYTLVNGNVVVREKVLL</sequence>